<keyword id="KW-0025">Alternative splicing</keyword>
<keyword id="KW-0040">ANK repeat</keyword>
<keyword id="KW-0343">GTPase activation</keyword>
<keyword id="KW-0479">Metal-binding</keyword>
<keyword id="KW-1185">Reference proteome</keyword>
<keyword id="KW-0862">Zinc</keyword>
<keyword id="KW-0863">Zinc-finger</keyword>
<name>AGAP9_HUMAN</name>
<comment type="function">
    <text evidence="5">Putative GTPase-activating protein.</text>
</comment>
<comment type="alternative products">
    <event type="alternative splicing"/>
    <isoform>
        <id>Q5VTM2-1</id>
        <name>1</name>
        <sequence type="displayed"/>
    </isoform>
    <isoform>
        <id>Q5VTM2-2</id>
        <name>2</name>
        <sequence type="described" ref="VSP_044549 VSP_044550 VSP_044551"/>
    </isoform>
</comment>
<comment type="miscellaneous">
    <text>Encoded by one of the numerous copies of centaurin gamma-like genes clustered in the q11 region of chromosome 10.</text>
</comment>
<comment type="similarity">
    <text evidence="5">Belongs to the centaurin gamma-like family.</text>
</comment>
<feature type="chain" id="PRO_0000284677" description="Arf-GAP with GTPase, ANK repeat and PH domain-containing protein 9">
    <location>
        <begin position="1"/>
        <end position="703"/>
    </location>
</feature>
<feature type="domain" description="PH" evidence="1">
    <location>
        <begin position="327"/>
        <end position="488"/>
    </location>
</feature>
<feature type="domain" description="Arf-GAP" evidence="2">
    <location>
        <begin position="509"/>
        <end position="629"/>
    </location>
</feature>
<feature type="repeat" description="ANK">
    <location>
        <begin position="631"/>
        <end position="700"/>
    </location>
</feature>
<feature type="zinc finger region" description="C4-type" evidence="2">
    <location>
        <begin position="524"/>
        <end position="547"/>
    </location>
</feature>
<feature type="region of interest" description="Disordered" evidence="3">
    <location>
        <begin position="249"/>
        <end position="287"/>
    </location>
</feature>
<feature type="region of interest" description="Disordered" evidence="3">
    <location>
        <begin position="299"/>
        <end position="323"/>
    </location>
</feature>
<feature type="region of interest" description="Disordered" evidence="3">
    <location>
        <begin position="427"/>
        <end position="449"/>
    </location>
</feature>
<feature type="compositionally biased region" description="Polar residues" evidence="3">
    <location>
        <begin position="271"/>
        <end position="286"/>
    </location>
</feature>
<feature type="compositionally biased region" description="Basic and acidic residues" evidence="3">
    <location>
        <begin position="303"/>
        <end position="318"/>
    </location>
</feature>
<feature type="splice variant" id="VSP_044549" description="In isoform 2." evidence="4">
    <original>MFEDVFSDSGNTGNFDRGKKRRLTIIECGCDINMMIDLAKVADLVLMLIDASFGFEMEMFEFLNICQAHGFPKILGVLTHLDSFKHNKQLKKTKKRLKHRFWTEVYQDKVGLTHELVQSLISTYSTIDAKMASSRVTLLSNSKPLGSEAIDNQG</original>
    <variation>MGNILTCRVHPS</variation>
    <location>
        <begin position="1"/>
        <end position="154"/>
    </location>
</feature>
<feature type="splice variant" id="VSP_044550" description="In isoform 2." evidence="4">
    <original>E</original>
    <variation>EALEFNLSANPEASTIFQRNSQTDALEFNSSANPEASTIFQRNSQTD</variation>
    <location>
        <position position="216"/>
    </location>
</feature>
<feature type="splice variant" id="VSP_044551" description="In isoform 2." evidence="4">
    <original>CDLGDTSSYHTK</original>
    <variation>VSTERFSQQYSSCSTIFLDDSTAIQHYLTMTIISVTLEIPHHITQRDADRSLSIPDEQLHSFA</variation>
    <location>
        <begin position="229"/>
        <end position="240"/>
    </location>
</feature>
<feature type="sequence conflict" description="In Ref. 2; BC171845." evidence="5" ref="2">
    <original>K</original>
    <variation>E</variation>
    <location>
        <position position="495"/>
    </location>
</feature>
<feature type="sequence conflict" description="In Ref. 2; BC171845." evidence="5" ref="2">
    <original>E</original>
    <variation>K</variation>
    <location>
        <position position="508"/>
    </location>
</feature>
<gene>
    <name type="primary">AGAP9</name>
    <name type="synonym">CTGLF6</name>
</gene>
<dbReference type="EMBL" id="AL591684">
    <property type="status" value="NOT_ANNOTATED_CDS"/>
    <property type="molecule type" value="Genomic_DNA"/>
</dbReference>
<dbReference type="EMBL" id="BC171845">
    <property type="status" value="NOT_ANNOTATED_CDS"/>
    <property type="molecule type" value="Genomic_DNA"/>
</dbReference>
<dbReference type="CCDS" id="CCDS73125.1">
    <molecule id="Q5VTM2-2"/>
</dbReference>
<dbReference type="RefSeq" id="NP_001177739.1">
    <molecule id="Q5VTM2-2"/>
    <property type="nucleotide sequence ID" value="NM_001190810.1"/>
</dbReference>
<dbReference type="SMR" id="Q5VTM2"/>
<dbReference type="BioGRID" id="568033">
    <property type="interactions" value="2"/>
</dbReference>
<dbReference type="FunCoup" id="Q5VTM2">
    <property type="interactions" value="249"/>
</dbReference>
<dbReference type="IntAct" id="Q5VTM2">
    <property type="interactions" value="1"/>
</dbReference>
<dbReference type="GlyCosmos" id="Q5VTM2">
    <property type="glycosylation" value="1 site, 1 glycan"/>
</dbReference>
<dbReference type="GlyGen" id="Q5VTM2">
    <property type="glycosylation" value="3 sites, 1 O-linked glycan (2 sites)"/>
</dbReference>
<dbReference type="iPTMnet" id="Q5VTM2"/>
<dbReference type="PhosphoSitePlus" id="Q5VTM2"/>
<dbReference type="BioMuta" id="AGAP9"/>
<dbReference type="DMDM" id="145558891"/>
<dbReference type="jPOST" id="Q5VTM2"/>
<dbReference type="MassIVE" id="Q5VTM2"/>
<dbReference type="PeptideAtlas" id="Q5VTM2"/>
<dbReference type="Antibodypedia" id="67499">
    <property type="antibodies" value="52 antibodies from 9 providers"/>
</dbReference>
<dbReference type="DNASU" id="642517"/>
<dbReference type="Ensembl" id="ENST00000452145.6">
    <molecule id="Q5VTM2-2"/>
    <property type="protein sequence ID" value="ENSP00000392206.2"/>
    <property type="gene ID" value="ENSG00000204172.12"/>
</dbReference>
<dbReference type="GeneID" id="642517"/>
<dbReference type="KEGG" id="hsa:642517"/>
<dbReference type="MANE-Select" id="ENST00000452145.6">
    <molecule id="Q5VTM2-2"/>
    <property type="protein sequence ID" value="ENSP00000392206.2"/>
    <property type="RefSeq nucleotide sequence ID" value="NM_001190810.1"/>
    <property type="RefSeq protein sequence ID" value="NP_001177739.1"/>
</dbReference>
<dbReference type="UCSC" id="uc057tbu.1">
    <molecule id="Q5VTM2-1"/>
    <property type="organism name" value="human"/>
</dbReference>
<dbReference type="AGR" id="HGNC:23463"/>
<dbReference type="CTD" id="642517"/>
<dbReference type="GeneCards" id="AGAP9"/>
<dbReference type="HGNC" id="HGNC:23463">
    <property type="gene designation" value="AGAP9"/>
</dbReference>
<dbReference type="HPA" id="ENSG00000204172">
    <property type="expression patterns" value="Low tissue specificity"/>
</dbReference>
<dbReference type="neXtProt" id="NX_Q5VTM2"/>
<dbReference type="OpenTargets" id="ENSG00000204172"/>
<dbReference type="VEuPathDB" id="HostDB:ENSG00000204172"/>
<dbReference type="GeneTree" id="ENSGT00940000163475"/>
<dbReference type="HOGENOM" id="CLU_392755_0_0_1"/>
<dbReference type="InParanoid" id="Q5VTM2"/>
<dbReference type="OMA" id="KEWWIRS"/>
<dbReference type="OrthoDB" id="6136903at2759"/>
<dbReference type="PAN-GO" id="Q5VTM2">
    <property type="GO annotations" value="3 GO annotations based on evolutionary models"/>
</dbReference>
<dbReference type="PhylomeDB" id="Q5VTM2"/>
<dbReference type="TreeFam" id="TF317762"/>
<dbReference type="PathwayCommons" id="Q5VTM2"/>
<dbReference type="SignaLink" id="Q5VTM2"/>
<dbReference type="BioGRID-ORCS" id="642517">
    <property type="hits" value="36 hits in 681 CRISPR screens"/>
</dbReference>
<dbReference type="GenomeRNAi" id="642517"/>
<dbReference type="Pharos" id="Q5VTM2">
    <property type="development level" value="Tdark"/>
</dbReference>
<dbReference type="PRO" id="PR:Q5VTM2"/>
<dbReference type="Proteomes" id="UP000005640">
    <property type="component" value="Chromosome 10"/>
</dbReference>
<dbReference type="RNAct" id="Q5VTM2">
    <property type="molecule type" value="protein"/>
</dbReference>
<dbReference type="Bgee" id="ENSG00000204172">
    <property type="expression patterns" value="Expressed in right uterine tube and 95 other cell types or tissues"/>
</dbReference>
<dbReference type="GO" id="GO:0005096">
    <property type="term" value="F:GTPase activator activity"/>
    <property type="evidence" value="ECO:0000318"/>
    <property type="project" value="GO_Central"/>
</dbReference>
<dbReference type="GO" id="GO:0003924">
    <property type="term" value="F:GTPase activity"/>
    <property type="evidence" value="ECO:0000318"/>
    <property type="project" value="GO_Central"/>
</dbReference>
<dbReference type="GO" id="GO:0008270">
    <property type="term" value="F:zinc ion binding"/>
    <property type="evidence" value="ECO:0007669"/>
    <property type="project" value="UniProtKB-KW"/>
</dbReference>
<dbReference type="CDD" id="cd08853">
    <property type="entry name" value="ArfGap_AGAP2"/>
    <property type="match status" value="1"/>
</dbReference>
<dbReference type="CDD" id="cd01250">
    <property type="entry name" value="PH_AGAP"/>
    <property type="match status" value="1"/>
</dbReference>
<dbReference type="FunFam" id="1.10.220.150:FF:000001">
    <property type="entry name" value="Arf-GAP with GTPase, ANK repeat and PH domain-containing protein 1"/>
    <property type="match status" value="1"/>
</dbReference>
<dbReference type="Gene3D" id="1.25.40.20">
    <property type="entry name" value="Ankyrin repeat-containing domain"/>
    <property type="match status" value="1"/>
</dbReference>
<dbReference type="Gene3D" id="1.10.220.150">
    <property type="entry name" value="Arf GTPase activating protein"/>
    <property type="match status" value="1"/>
</dbReference>
<dbReference type="Gene3D" id="3.40.50.300">
    <property type="entry name" value="P-loop containing nucleotide triphosphate hydrolases"/>
    <property type="match status" value="1"/>
</dbReference>
<dbReference type="Gene3D" id="2.30.29.30">
    <property type="entry name" value="Pleckstrin-homology domain (PH domain)/Phosphotyrosine-binding domain (PTB)"/>
    <property type="match status" value="1"/>
</dbReference>
<dbReference type="InterPro" id="IPR036770">
    <property type="entry name" value="Ankyrin_rpt-contain_sf"/>
</dbReference>
<dbReference type="InterPro" id="IPR051282">
    <property type="entry name" value="Arf-GAP_GTPase_ANK_PH"/>
</dbReference>
<dbReference type="InterPro" id="IPR037278">
    <property type="entry name" value="ARFGAP/RecO"/>
</dbReference>
<dbReference type="InterPro" id="IPR001164">
    <property type="entry name" value="ArfGAP_dom"/>
</dbReference>
<dbReference type="InterPro" id="IPR038508">
    <property type="entry name" value="ArfGAP_dom_sf"/>
</dbReference>
<dbReference type="InterPro" id="IPR027417">
    <property type="entry name" value="P-loop_NTPase"/>
</dbReference>
<dbReference type="InterPro" id="IPR011993">
    <property type="entry name" value="PH-like_dom_sf"/>
</dbReference>
<dbReference type="InterPro" id="IPR001849">
    <property type="entry name" value="PH_domain"/>
</dbReference>
<dbReference type="PANTHER" id="PTHR45819:SF7">
    <property type="entry name" value="ARF-GAP WITH GTPASE, ANK REPEAT AND PH DOMAIN-CONTAINING PROTEIN 4-RELATED"/>
    <property type="match status" value="1"/>
</dbReference>
<dbReference type="PANTHER" id="PTHR45819">
    <property type="entry name" value="CENTAURIN-GAMMA-1A"/>
    <property type="match status" value="1"/>
</dbReference>
<dbReference type="Pfam" id="PF01412">
    <property type="entry name" value="ArfGap"/>
    <property type="match status" value="1"/>
</dbReference>
<dbReference type="PRINTS" id="PR00405">
    <property type="entry name" value="REVINTRACTNG"/>
</dbReference>
<dbReference type="SMART" id="SM00105">
    <property type="entry name" value="ArfGap"/>
    <property type="match status" value="1"/>
</dbReference>
<dbReference type="SMART" id="SM00233">
    <property type="entry name" value="PH"/>
    <property type="match status" value="1"/>
</dbReference>
<dbReference type="SUPFAM" id="SSF57863">
    <property type="entry name" value="ArfGap/RecO-like zinc finger"/>
    <property type="match status" value="1"/>
</dbReference>
<dbReference type="SUPFAM" id="SSF52540">
    <property type="entry name" value="P-loop containing nucleoside triphosphate hydrolases"/>
    <property type="match status" value="1"/>
</dbReference>
<dbReference type="SUPFAM" id="SSF50729">
    <property type="entry name" value="PH domain-like"/>
    <property type="match status" value="1"/>
</dbReference>
<dbReference type="PROSITE" id="PS50297">
    <property type="entry name" value="ANK_REP_REGION"/>
    <property type="match status" value="1"/>
</dbReference>
<dbReference type="PROSITE" id="PS50115">
    <property type="entry name" value="ARFGAP"/>
    <property type="match status" value="1"/>
</dbReference>
<dbReference type="PROSITE" id="PS50003">
    <property type="entry name" value="PH_DOMAIN"/>
    <property type="match status" value="1"/>
</dbReference>
<reference key="1">
    <citation type="journal article" date="2004" name="Nature">
        <title>The DNA sequence and comparative analysis of human chromosome 10.</title>
        <authorList>
            <person name="Deloukas P."/>
            <person name="Earthrowl M.E."/>
            <person name="Grafham D.V."/>
            <person name="Rubenfield M."/>
            <person name="French L."/>
            <person name="Steward C.A."/>
            <person name="Sims S.K."/>
            <person name="Jones M.C."/>
            <person name="Searle S."/>
            <person name="Scott C."/>
            <person name="Howe K."/>
            <person name="Hunt S.E."/>
            <person name="Andrews T.D."/>
            <person name="Gilbert J.G.R."/>
            <person name="Swarbreck D."/>
            <person name="Ashurst J.L."/>
            <person name="Taylor A."/>
            <person name="Battles J."/>
            <person name="Bird C.P."/>
            <person name="Ainscough R."/>
            <person name="Almeida J.P."/>
            <person name="Ashwell R.I.S."/>
            <person name="Ambrose K.D."/>
            <person name="Babbage A.K."/>
            <person name="Bagguley C.L."/>
            <person name="Bailey J."/>
            <person name="Banerjee R."/>
            <person name="Bates K."/>
            <person name="Beasley H."/>
            <person name="Bray-Allen S."/>
            <person name="Brown A.J."/>
            <person name="Brown J.Y."/>
            <person name="Burford D.C."/>
            <person name="Burrill W."/>
            <person name="Burton J."/>
            <person name="Cahill P."/>
            <person name="Camire D."/>
            <person name="Carter N.P."/>
            <person name="Chapman J.C."/>
            <person name="Clark S.Y."/>
            <person name="Clarke G."/>
            <person name="Clee C.M."/>
            <person name="Clegg S."/>
            <person name="Corby N."/>
            <person name="Coulson A."/>
            <person name="Dhami P."/>
            <person name="Dutta I."/>
            <person name="Dunn M."/>
            <person name="Faulkner L."/>
            <person name="Frankish A."/>
            <person name="Frankland J.A."/>
            <person name="Garner P."/>
            <person name="Garnett J."/>
            <person name="Gribble S."/>
            <person name="Griffiths C."/>
            <person name="Grocock R."/>
            <person name="Gustafson E."/>
            <person name="Hammond S."/>
            <person name="Harley J.L."/>
            <person name="Hart E."/>
            <person name="Heath P.D."/>
            <person name="Ho T.P."/>
            <person name="Hopkins B."/>
            <person name="Horne J."/>
            <person name="Howden P.J."/>
            <person name="Huckle E."/>
            <person name="Hynds C."/>
            <person name="Johnson C."/>
            <person name="Johnson D."/>
            <person name="Kana A."/>
            <person name="Kay M."/>
            <person name="Kimberley A.M."/>
            <person name="Kershaw J.K."/>
            <person name="Kokkinaki M."/>
            <person name="Laird G.K."/>
            <person name="Lawlor S."/>
            <person name="Lee H.M."/>
            <person name="Leongamornlert D.A."/>
            <person name="Laird G."/>
            <person name="Lloyd C."/>
            <person name="Lloyd D.M."/>
            <person name="Loveland J."/>
            <person name="Lovell J."/>
            <person name="McLaren S."/>
            <person name="McLay K.E."/>
            <person name="McMurray A."/>
            <person name="Mashreghi-Mohammadi M."/>
            <person name="Matthews L."/>
            <person name="Milne S."/>
            <person name="Nickerson T."/>
            <person name="Nguyen M."/>
            <person name="Overton-Larty E."/>
            <person name="Palmer S.A."/>
            <person name="Pearce A.V."/>
            <person name="Peck A.I."/>
            <person name="Pelan S."/>
            <person name="Phillimore B."/>
            <person name="Porter K."/>
            <person name="Rice C.M."/>
            <person name="Rogosin A."/>
            <person name="Ross M.T."/>
            <person name="Sarafidou T."/>
            <person name="Sehra H.K."/>
            <person name="Shownkeen R."/>
            <person name="Skuce C.D."/>
            <person name="Smith M."/>
            <person name="Standring L."/>
            <person name="Sycamore N."/>
            <person name="Tester J."/>
            <person name="Thorpe A."/>
            <person name="Torcasso W."/>
            <person name="Tracey A."/>
            <person name="Tromans A."/>
            <person name="Tsolas J."/>
            <person name="Wall M."/>
            <person name="Walsh J."/>
            <person name="Wang H."/>
            <person name="Weinstock K."/>
            <person name="West A.P."/>
            <person name="Willey D.L."/>
            <person name="Whitehead S.L."/>
            <person name="Wilming L."/>
            <person name="Wray P.W."/>
            <person name="Young L."/>
            <person name="Chen Y."/>
            <person name="Lovering R.C."/>
            <person name="Moschonas N.K."/>
            <person name="Siebert R."/>
            <person name="Fechtel K."/>
            <person name="Bentley D."/>
            <person name="Durbin R.M."/>
            <person name="Hubbard T."/>
            <person name="Doucette-Stamm L."/>
            <person name="Beck S."/>
            <person name="Smith D.R."/>
            <person name="Rogers J."/>
        </authorList>
    </citation>
    <scope>NUCLEOTIDE SEQUENCE [LARGE SCALE GENOMIC DNA]</scope>
</reference>
<reference key="2">
    <citation type="journal article" date="2004" name="Genome Res.">
        <title>The status, quality, and expansion of the NIH full-length cDNA project: the Mammalian Gene Collection (MGC).</title>
        <authorList>
            <consortium name="The MGC Project Team"/>
        </authorList>
    </citation>
    <scope>NUCLEOTIDE SEQUENCE [LARGE SCALE MRNA] (ISOFORM 2)</scope>
    <source>
        <tissue>Brain</tissue>
    </source>
</reference>
<organism>
    <name type="scientific">Homo sapiens</name>
    <name type="common">Human</name>
    <dbReference type="NCBI Taxonomy" id="9606"/>
    <lineage>
        <taxon>Eukaryota</taxon>
        <taxon>Metazoa</taxon>
        <taxon>Chordata</taxon>
        <taxon>Craniata</taxon>
        <taxon>Vertebrata</taxon>
        <taxon>Euteleostomi</taxon>
        <taxon>Mammalia</taxon>
        <taxon>Eutheria</taxon>
        <taxon>Euarchontoglires</taxon>
        <taxon>Primates</taxon>
        <taxon>Haplorrhini</taxon>
        <taxon>Catarrhini</taxon>
        <taxon>Hominidae</taxon>
        <taxon>Homo</taxon>
    </lineage>
</organism>
<sequence>MFEDVFSDSGNTGNFDRGKKRRLTIIECGCDINMMIDLAKVADLVLMLIDASFGFEMEMFEFLNICQAHGFPKILGVLTHLDSFKHNKQLKKTKKRLKHRFWTEVYQDKVGLTHELVQSLISTYSTIDAKMASSRVTLLSNSKPLGSEAIDNQGVSLEFDQQQGSVCPSESEIYEAGAEDRMAGAPMAAAVQPAEVTVEVGEDLHMHQVRDREMPEVVEIRRSNCTNHCDLGDTSSYHTKVSTVHIMKKRNGGGSLNNYSSSIPPTPSTSQEDPQFSVPPTANTPTPVCKRSMRWSNLFTSEKGSDPDKERKAPENHADTIGSGRAIPIKQGMLLKRSGKWLKTWKKKYVTLCSNGVLTYYSSLGDYMKNIHKKEIDLRTSTIKVPGKWPSLATSACAPISSSKSNGLSKDMDTGLGDSICFSPGISSTTSPKLNPPPSPHANKKKHLKKKSTNNFMIVSATGQTWHFEATTYEERDAWVQAIQSQILASLQSCKSSKSKSQLTSQSEAMALQSIQNMRGNAHCVDCETQNPKWASLNLGVLMCIECSGIHRSFGTRLSRVRSLELDDWPVELRKVMSSIGNELANSIWEGSSQGQTKPSIKSTREEKEWWIRSKYEEKLFLAPLPCTELSLGQQLLRATTDEDLQTAILLLAHGSREEVNETCGEGDGCTALHLACRKGNVVLEQLLTGWTSWPEMPTGTQR</sequence>
<evidence type="ECO:0000255" key="1">
    <source>
        <dbReference type="PROSITE-ProRule" id="PRU00145"/>
    </source>
</evidence>
<evidence type="ECO:0000255" key="2">
    <source>
        <dbReference type="PROSITE-ProRule" id="PRU00288"/>
    </source>
</evidence>
<evidence type="ECO:0000256" key="3">
    <source>
        <dbReference type="SAM" id="MobiDB-lite"/>
    </source>
</evidence>
<evidence type="ECO:0000303" key="4">
    <source>
    </source>
</evidence>
<evidence type="ECO:0000305" key="5"/>
<proteinExistence type="inferred from homology"/>
<protein>
    <recommendedName>
        <fullName>Arf-GAP with GTPase, ANK repeat and PH domain-containing protein 9</fullName>
        <shortName>AGAP-9</shortName>
    </recommendedName>
    <alternativeName>
        <fullName>Centaurin-gamma-like family member 6</fullName>
    </alternativeName>
</protein>
<accession>Q5VTM2</accession>
<accession>D3YTF3</accession>